<protein>
    <recommendedName>
        <fullName evidence="1">Dihydroxy-acid dehydratase</fullName>
        <shortName evidence="1">DAD</shortName>
        <ecNumber evidence="1">4.2.1.9</ecNumber>
    </recommendedName>
</protein>
<accession>A1K344</accession>
<gene>
    <name evidence="1" type="primary">ilvD</name>
    <name type="ordered locus">azo0632</name>
</gene>
<feature type="chain" id="PRO_1000000955" description="Dihydroxy-acid dehydratase">
    <location>
        <begin position="1"/>
        <end position="616"/>
    </location>
</feature>
<feature type="active site" description="Proton acceptor" evidence="1">
    <location>
        <position position="517"/>
    </location>
</feature>
<feature type="binding site" evidence="1">
    <location>
        <position position="81"/>
    </location>
    <ligand>
        <name>Mg(2+)</name>
        <dbReference type="ChEBI" id="CHEBI:18420"/>
    </ligand>
</feature>
<feature type="binding site" evidence="1">
    <location>
        <position position="122"/>
    </location>
    <ligand>
        <name>[2Fe-2S] cluster</name>
        <dbReference type="ChEBI" id="CHEBI:190135"/>
    </ligand>
</feature>
<feature type="binding site" evidence="1">
    <location>
        <position position="123"/>
    </location>
    <ligand>
        <name>Mg(2+)</name>
        <dbReference type="ChEBI" id="CHEBI:18420"/>
    </ligand>
</feature>
<feature type="binding site" description="via carbamate group" evidence="1">
    <location>
        <position position="124"/>
    </location>
    <ligand>
        <name>Mg(2+)</name>
        <dbReference type="ChEBI" id="CHEBI:18420"/>
    </ligand>
</feature>
<feature type="binding site" evidence="1">
    <location>
        <position position="195"/>
    </location>
    <ligand>
        <name>[2Fe-2S] cluster</name>
        <dbReference type="ChEBI" id="CHEBI:190135"/>
    </ligand>
</feature>
<feature type="binding site" evidence="1">
    <location>
        <position position="491"/>
    </location>
    <ligand>
        <name>Mg(2+)</name>
        <dbReference type="ChEBI" id="CHEBI:18420"/>
    </ligand>
</feature>
<feature type="modified residue" description="N6-carboxylysine" evidence="1">
    <location>
        <position position="124"/>
    </location>
</feature>
<reference key="1">
    <citation type="journal article" date="2006" name="Nat. Biotechnol.">
        <title>Complete genome of the mutualistic, N2-fixing grass endophyte Azoarcus sp. strain BH72.</title>
        <authorList>
            <person name="Krause A."/>
            <person name="Ramakumar A."/>
            <person name="Bartels D."/>
            <person name="Battistoni F."/>
            <person name="Bekel T."/>
            <person name="Boch J."/>
            <person name="Boehm M."/>
            <person name="Friedrich F."/>
            <person name="Hurek T."/>
            <person name="Krause L."/>
            <person name="Linke B."/>
            <person name="McHardy A.C."/>
            <person name="Sarkar A."/>
            <person name="Schneiker S."/>
            <person name="Syed A.A."/>
            <person name="Thauer R."/>
            <person name="Vorhoelter F.-J."/>
            <person name="Weidner S."/>
            <person name="Puehler A."/>
            <person name="Reinhold-Hurek B."/>
            <person name="Kaiser O."/>
            <person name="Goesmann A."/>
        </authorList>
    </citation>
    <scope>NUCLEOTIDE SEQUENCE [LARGE SCALE GENOMIC DNA]</scope>
    <source>
        <strain>BH72</strain>
    </source>
</reference>
<comment type="function">
    <text evidence="1">Functions in the biosynthesis of branched-chain amino acids. Catalyzes the dehydration of (2R,3R)-2,3-dihydroxy-3-methylpentanoate (2,3-dihydroxy-3-methylvalerate) into 2-oxo-3-methylpentanoate (2-oxo-3-methylvalerate) and of (2R)-2,3-dihydroxy-3-methylbutanoate (2,3-dihydroxyisovalerate) into 2-oxo-3-methylbutanoate (2-oxoisovalerate), the penultimate precursor to L-isoleucine and L-valine, respectively.</text>
</comment>
<comment type="catalytic activity">
    <reaction evidence="1">
        <text>(2R)-2,3-dihydroxy-3-methylbutanoate = 3-methyl-2-oxobutanoate + H2O</text>
        <dbReference type="Rhea" id="RHEA:24809"/>
        <dbReference type="ChEBI" id="CHEBI:11851"/>
        <dbReference type="ChEBI" id="CHEBI:15377"/>
        <dbReference type="ChEBI" id="CHEBI:49072"/>
        <dbReference type="EC" id="4.2.1.9"/>
    </reaction>
    <physiologicalReaction direction="left-to-right" evidence="1">
        <dbReference type="Rhea" id="RHEA:24810"/>
    </physiologicalReaction>
</comment>
<comment type="catalytic activity">
    <reaction evidence="1">
        <text>(2R,3R)-2,3-dihydroxy-3-methylpentanoate = (S)-3-methyl-2-oxopentanoate + H2O</text>
        <dbReference type="Rhea" id="RHEA:27694"/>
        <dbReference type="ChEBI" id="CHEBI:15377"/>
        <dbReference type="ChEBI" id="CHEBI:35146"/>
        <dbReference type="ChEBI" id="CHEBI:49258"/>
        <dbReference type="EC" id="4.2.1.9"/>
    </reaction>
    <physiologicalReaction direction="left-to-right" evidence="1">
        <dbReference type="Rhea" id="RHEA:27695"/>
    </physiologicalReaction>
</comment>
<comment type="cofactor">
    <cofactor evidence="1">
        <name>[2Fe-2S] cluster</name>
        <dbReference type="ChEBI" id="CHEBI:190135"/>
    </cofactor>
    <text evidence="1">Binds 1 [2Fe-2S] cluster per subunit. This cluster acts as a Lewis acid cofactor.</text>
</comment>
<comment type="cofactor">
    <cofactor evidence="1">
        <name>Mg(2+)</name>
        <dbReference type="ChEBI" id="CHEBI:18420"/>
    </cofactor>
</comment>
<comment type="pathway">
    <text evidence="1">Amino-acid biosynthesis; L-isoleucine biosynthesis; L-isoleucine from 2-oxobutanoate: step 3/4.</text>
</comment>
<comment type="pathway">
    <text evidence="1">Amino-acid biosynthesis; L-valine biosynthesis; L-valine from pyruvate: step 3/4.</text>
</comment>
<comment type="subunit">
    <text evidence="1">Homodimer.</text>
</comment>
<comment type="similarity">
    <text evidence="1">Belongs to the IlvD/Edd family.</text>
</comment>
<keyword id="KW-0001">2Fe-2S</keyword>
<keyword id="KW-0028">Amino-acid biosynthesis</keyword>
<keyword id="KW-0100">Branched-chain amino acid biosynthesis</keyword>
<keyword id="KW-0408">Iron</keyword>
<keyword id="KW-0411">Iron-sulfur</keyword>
<keyword id="KW-0456">Lyase</keyword>
<keyword id="KW-0460">Magnesium</keyword>
<keyword id="KW-0479">Metal-binding</keyword>
<keyword id="KW-1185">Reference proteome</keyword>
<dbReference type="EC" id="4.2.1.9" evidence="1"/>
<dbReference type="EMBL" id="AM406670">
    <property type="protein sequence ID" value="CAL93249.1"/>
    <property type="molecule type" value="Genomic_DNA"/>
</dbReference>
<dbReference type="RefSeq" id="WP_011764367.1">
    <property type="nucleotide sequence ID" value="NC_008702.1"/>
</dbReference>
<dbReference type="SMR" id="A1K344"/>
<dbReference type="STRING" id="62928.azo0632"/>
<dbReference type="KEGG" id="azo:azo0632"/>
<dbReference type="eggNOG" id="COG0129">
    <property type="taxonomic scope" value="Bacteria"/>
</dbReference>
<dbReference type="HOGENOM" id="CLU_014271_4_2_4"/>
<dbReference type="UniPathway" id="UPA00047">
    <property type="reaction ID" value="UER00057"/>
</dbReference>
<dbReference type="UniPathway" id="UPA00049">
    <property type="reaction ID" value="UER00061"/>
</dbReference>
<dbReference type="Proteomes" id="UP000002588">
    <property type="component" value="Chromosome"/>
</dbReference>
<dbReference type="GO" id="GO:0005829">
    <property type="term" value="C:cytosol"/>
    <property type="evidence" value="ECO:0007669"/>
    <property type="project" value="TreeGrafter"/>
</dbReference>
<dbReference type="GO" id="GO:0051537">
    <property type="term" value="F:2 iron, 2 sulfur cluster binding"/>
    <property type="evidence" value="ECO:0007669"/>
    <property type="project" value="UniProtKB-UniRule"/>
</dbReference>
<dbReference type="GO" id="GO:0004160">
    <property type="term" value="F:dihydroxy-acid dehydratase activity"/>
    <property type="evidence" value="ECO:0007669"/>
    <property type="project" value="UniProtKB-UniRule"/>
</dbReference>
<dbReference type="GO" id="GO:0000287">
    <property type="term" value="F:magnesium ion binding"/>
    <property type="evidence" value="ECO:0007669"/>
    <property type="project" value="UniProtKB-UniRule"/>
</dbReference>
<dbReference type="GO" id="GO:0009097">
    <property type="term" value="P:isoleucine biosynthetic process"/>
    <property type="evidence" value="ECO:0007669"/>
    <property type="project" value="UniProtKB-UniRule"/>
</dbReference>
<dbReference type="GO" id="GO:0009099">
    <property type="term" value="P:L-valine biosynthetic process"/>
    <property type="evidence" value="ECO:0007669"/>
    <property type="project" value="UniProtKB-UniRule"/>
</dbReference>
<dbReference type="FunFam" id="3.50.30.80:FF:000001">
    <property type="entry name" value="Dihydroxy-acid dehydratase"/>
    <property type="match status" value="1"/>
</dbReference>
<dbReference type="Gene3D" id="3.50.30.80">
    <property type="entry name" value="IlvD/EDD C-terminal domain-like"/>
    <property type="match status" value="1"/>
</dbReference>
<dbReference type="HAMAP" id="MF_00012">
    <property type="entry name" value="IlvD"/>
    <property type="match status" value="1"/>
</dbReference>
<dbReference type="InterPro" id="IPR042096">
    <property type="entry name" value="Dihydro-acid_dehy_C"/>
</dbReference>
<dbReference type="InterPro" id="IPR004404">
    <property type="entry name" value="DihydroxyA_deHydtase"/>
</dbReference>
<dbReference type="InterPro" id="IPR020558">
    <property type="entry name" value="DiOHA_6PGluconate_deHydtase_CS"/>
</dbReference>
<dbReference type="InterPro" id="IPR056740">
    <property type="entry name" value="ILV_EDD_C"/>
</dbReference>
<dbReference type="InterPro" id="IPR000581">
    <property type="entry name" value="ILV_EDD_N"/>
</dbReference>
<dbReference type="InterPro" id="IPR037237">
    <property type="entry name" value="IlvD/EDD_N"/>
</dbReference>
<dbReference type="NCBIfam" id="TIGR00110">
    <property type="entry name" value="ilvD"/>
    <property type="match status" value="1"/>
</dbReference>
<dbReference type="NCBIfam" id="NF009103">
    <property type="entry name" value="PRK12448.1"/>
    <property type="match status" value="1"/>
</dbReference>
<dbReference type="PANTHER" id="PTHR43661">
    <property type="entry name" value="D-XYLONATE DEHYDRATASE"/>
    <property type="match status" value="1"/>
</dbReference>
<dbReference type="PANTHER" id="PTHR43661:SF3">
    <property type="entry name" value="D-XYLONATE DEHYDRATASE YAGF-RELATED"/>
    <property type="match status" value="1"/>
</dbReference>
<dbReference type="Pfam" id="PF24877">
    <property type="entry name" value="ILV_EDD_C"/>
    <property type="match status" value="1"/>
</dbReference>
<dbReference type="Pfam" id="PF00920">
    <property type="entry name" value="ILVD_EDD_N"/>
    <property type="match status" value="1"/>
</dbReference>
<dbReference type="SUPFAM" id="SSF143975">
    <property type="entry name" value="IlvD/EDD N-terminal domain-like"/>
    <property type="match status" value="1"/>
</dbReference>
<dbReference type="SUPFAM" id="SSF52016">
    <property type="entry name" value="LeuD/IlvD-like"/>
    <property type="match status" value="1"/>
</dbReference>
<dbReference type="PROSITE" id="PS00886">
    <property type="entry name" value="ILVD_EDD_1"/>
    <property type="match status" value="1"/>
</dbReference>
<dbReference type="PROSITE" id="PS00887">
    <property type="entry name" value="ILVD_EDD_2"/>
    <property type="match status" value="1"/>
</dbReference>
<evidence type="ECO:0000255" key="1">
    <source>
        <dbReference type="HAMAP-Rule" id="MF_00012"/>
    </source>
</evidence>
<organism>
    <name type="scientific">Azoarcus sp. (strain BH72)</name>
    <dbReference type="NCBI Taxonomy" id="418699"/>
    <lineage>
        <taxon>Bacteria</taxon>
        <taxon>Pseudomonadati</taxon>
        <taxon>Pseudomonadota</taxon>
        <taxon>Betaproteobacteria</taxon>
        <taxon>Rhodocyclales</taxon>
        <taxon>Zoogloeaceae</taxon>
        <taxon>Azoarcus</taxon>
    </lineage>
</organism>
<proteinExistence type="inferred from homology"/>
<sequence length="616" mass="65694">MPQYRSRTSTAGRNMAGARALWRATGMKDGDFEKPIIAIANSFTQFVPGHVHLKDLGQLVAREIEAAGGVAKEFNTIAVDDGIAMGHGGMLYSLPSRDLIADSVEYMVNAHTADALVCISNCDKITPGMLMAALRLNIPTIFVSGGPMEAGKVKWEAKIIPLDLVDAMVKAADKNCSDEEVDAIERSACPTCGSCSGMFTANSMNCLTEALGLSLPGNGTTLATHADREKLFREAGRRIVDLAKRYYEKDDATVLPRAIASFAAFENAISLDVAMGGSTNTVLHLLAAAKEAGVDFTMKDIDRISRHVPCLCKVAPAVPDVHIEDVHRAGGIMSILGELDRAGLLNRDVPTVHSKTLGEALGRWDIMQAHDKAVFDFFLAAPGGVPTQVAFSQNRRWNELDMDRAKGVIRNKANAFSQDGGLAVLYGNIAEKGCIVKTAGVDESIWQFTGKARVYESQEDAVEGILGEQVQAGDVVVIRYEGPKGGPGMQEMLYPTSYLKSRGLGKECALLTDGRFSGGTSGLSIGHASPEAAMGGAIALVEDGDTIEIDIPNRRIALAVSDEELARRRAAMEAKGAAAWKPANRERVVSAALQAYAALTTSADTGAVRDITQVQR</sequence>
<name>ILVD_AZOSB</name>